<protein>
    <recommendedName>
        <fullName>Protein O-mannose kinase</fullName>
        <shortName>POMK</shortName>
        <ecNumber>2.7.1.183</ecNumber>
    </recommendedName>
    <alternativeName>
        <fullName>Protein kinase-like protein SgK196</fullName>
    </alternativeName>
    <alternativeName>
        <fullName>Sugen kinase 196</fullName>
    </alternativeName>
</protein>
<sequence>MGGTAVGGVIGVRCGVPAVLLCLGALLCANVLLYFYLDALYQNTNPPSAHTQCPPRHFKVGTMSSCSPWLKCPEIRSGVRRVKLIGQGAVKKVYLSEWQGQKVALSVLSSDQYADDFLHGLSMLRALQSSHVVTLVGVCEEDAVFVTEYHPLGSVLTLDTTLAQERYRWRNSWHTRLQLAIDYVAFLAYLHSSPAGIRVMCDSNDLHKTLSQFLLASDMRLLANDLDALPEVEKGGLGVKCGHHELTGDFVAPEQLWPYGEDFSFSDEAMPGYDEKTDIWKIPDVTRFLLGDVLGGDVIHFHLFQIYSECKRKEAHMRPTAREVLSVYRSVYDSMMESQSQRVRDML</sequence>
<evidence type="ECO:0000250" key="1"/>
<evidence type="ECO:0000255" key="2"/>
<evidence type="ECO:0000255" key="3">
    <source>
        <dbReference type="PROSITE-ProRule" id="PRU00159"/>
    </source>
</evidence>
<evidence type="ECO:0000305" key="4"/>
<evidence type="ECO:0007829" key="5">
    <source>
        <dbReference type="PDB" id="5GZA"/>
    </source>
</evidence>
<organism>
    <name type="scientific">Danio rerio</name>
    <name type="common">Zebrafish</name>
    <name type="synonym">Brachydanio rerio</name>
    <dbReference type="NCBI Taxonomy" id="7955"/>
    <lineage>
        <taxon>Eukaryota</taxon>
        <taxon>Metazoa</taxon>
        <taxon>Chordata</taxon>
        <taxon>Craniata</taxon>
        <taxon>Vertebrata</taxon>
        <taxon>Euteleostomi</taxon>
        <taxon>Actinopterygii</taxon>
        <taxon>Neopterygii</taxon>
        <taxon>Teleostei</taxon>
        <taxon>Ostariophysi</taxon>
        <taxon>Cypriniformes</taxon>
        <taxon>Danionidae</taxon>
        <taxon>Danioninae</taxon>
        <taxon>Danio</taxon>
    </lineage>
</organism>
<name>SG196_DANRE</name>
<comment type="function">
    <text evidence="1">Protein O-mannose kinase that specifically mediates phosphorylation at the 6-position of an O-mannose of the trisaccharide (N-acetylgalactosamine (GalNAc)-beta-1,3-N-acetylglucosamine (GlcNAc)-beta-1,4-mannose) to generate phosphorylated O-mannosyl trisaccharide (N-acetylgalactosamine-beta-1,3-N-acetylglucosamine-beta-1,4-(phosphate-6-)mannose). Phosphorylated O-mannosyl trisaccharide is a carbohydrate structure present in alpha-dystroglycan (dag1), which is required for binding laminin G-like domain-containing extracellular proteins with high affinity. Only shows kinase activity when the GalNAc-beta-3-GlcNAc-beta-terminus is linked to the 4-position of O-mannose, suggesting that this disaccharide serves as the substrate recognition motif (By similarity).</text>
</comment>
<comment type="catalytic activity">
    <reaction>
        <text>3-O-[beta-D-GalNAc-(1-&gt;3)-beta-D-GlcNAc-(1-&gt;4)-alpha-D-Man]-L-Thr-[protein] + ATP = 3-O-[beta-D-GalNAc-(1-&gt;3)-beta-D-GlcNAc-(1-&gt;4)-(O-6-P-alpha-D-Man)]-Thr-[protein] + ADP + H(+)</text>
        <dbReference type="Rhea" id="RHEA:52616"/>
        <dbReference type="Rhea" id="RHEA-COMP:13308"/>
        <dbReference type="Rhea" id="RHEA-COMP:13309"/>
        <dbReference type="ChEBI" id="CHEBI:15378"/>
        <dbReference type="ChEBI" id="CHEBI:30616"/>
        <dbReference type="ChEBI" id="CHEBI:136709"/>
        <dbReference type="ChEBI" id="CHEBI:136710"/>
        <dbReference type="ChEBI" id="CHEBI:456216"/>
        <dbReference type="EC" id="2.7.1.183"/>
    </reaction>
</comment>
<comment type="subcellular location">
    <subcellularLocation>
        <location evidence="1">Endoplasmic reticulum membrane</location>
        <topology evidence="1">Single-pass type II membrane protein</topology>
    </subcellularLocation>
</comment>
<comment type="similarity">
    <text evidence="3">Belongs to the protein kinase superfamily. Ser/Thr protein kinase family. STKL subfamily.</text>
</comment>
<comment type="caution">
    <text evidence="4">Although related to the Ser/Thr protein kinase family, has no protein kinase activity and acts as a mannose kinase instead.</text>
</comment>
<proteinExistence type="evidence at protein level"/>
<reference key="1">
    <citation type="submission" date="2004-11" db="EMBL/GenBank/DDBJ databases">
        <authorList>
            <consortium name="NIH - Zebrafish Gene Collection (ZGC) project"/>
        </authorList>
    </citation>
    <scope>NUCLEOTIDE SEQUENCE [LARGE SCALE MRNA]</scope>
    <source>
        <tissue>Embryo</tissue>
    </source>
</reference>
<keyword id="KW-0002">3D-structure</keyword>
<keyword id="KW-0067">ATP-binding</keyword>
<keyword id="KW-0256">Endoplasmic reticulum</keyword>
<keyword id="KW-0418">Kinase</keyword>
<keyword id="KW-0472">Membrane</keyword>
<keyword id="KW-0547">Nucleotide-binding</keyword>
<keyword id="KW-1185">Reference proteome</keyword>
<keyword id="KW-0735">Signal-anchor</keyword>
<keyword id="KW-0808">Transferase</keyword>
<keyword id="KW-0812">Transmembrane</keyword>
<keyword id="KW-1133">Transmembrane helix</keyword>
<feature type="chain" id="PRO_0000263001" description="Protein O-mannose kinase">
    <location>
        <begin position="1"/>
        <end position="347"/>
    </location>
</feature>
<feature type="topological domain" description="Cytoplasmic" evidence="2">
    <location>
        <begin position="1"/>
        <end position="14"/>
    </location>
</feature>
<feature type="transmembrane region" description="Helical; Signal-anchor for type II membrane protein" evidence="2">
    <location>
        <begin position="15"/>
        <end position="35"/>
    </location>
</feature>
<feature type="topological domain" description="Lumenal" evidence="2">
    <location>
        <begin position="36"/>
        <end position="347"/>
    </location>
</feature>
<feature type="domain" description="Protein kinase" evidence="3">
    <location>
        <begin position="79"/>
        <end position="347"/>
    </location>
</feature>
<feature type="helix" evidence="5">
    <location>
        <begin position="72"/>
        <end position="78"/>
    </location>
</feature>
<feature type="strand" evidence="5">
    <location>
        <begin position="80"/>
        <end position="86"/>
    </location>
</feature>
<feature type="strand" evidence="5">
    <location>
        <begin position="89"/>
        <end position="98"/>
    </location>
</feature>
<feature type="strand" evidence="5">
    <location>
        <begin position="101"/>
        <end position="109"/>
    </location>
</feature>
<feature type="helix" evidence="5">
    <location>
        <begin position="111"/>
        <end position="113"/>
    </location>
</feature>
<feature type="helix" evidence="5">
    <location>
        <begin position="114"/>
        <end position="126"/>
    </location>
</feature>
<feature type="strand" evidence="5">
    <location>
        <begin position="135"/>
        <end position="139"/>
    </location>
</feature>
<feature type="helix" evidence="5">
    <location>
        <begin position="140"/>
        <end position="142"/>
    </location>
</feature>
<feature type="strand" evidence="5">
    <location>
        <begin position="144"/>
        <end position="147"/>
    </location>
</feature>
<feature type="helix" evidence="5">
    <location>
        <begin position="155"/>
        <end position="157"/>
    </location>
</feature>
<feature type="helix" evidence="5">
    <location>
        <begin position="158"/>
        <end position="163"/>
    </location>
</feature>
<feature type="helix" evidence="5">
    <location>
        <begin position="173"/>
        <end position="191"/>
    </location>
</feature>
<feature type="strand" evidence="5">
    <location>
        <begin position="196"/>
        <end position="198"/>
    </location>
</feature>
<feature type="helix" evidence="5">
    <location>
        <begin position="206"/>
        <end position="210"/>
    </location>
</feature>
<feature type="strand" evidence="5">
    <location>
        <begin position="213"/>
        <end position="216"/>
    </location>
</feature>
<feature type="turn" evidence="5">
    <location>
        <begin position="217"/>
        <end position="219"/>
    </location>
</feature>
<feature type="strand" evidence="5">
    <location>
        <begin position="220"/>
        <end position="223"/>
    </location>
</feature>
<feature type="strand" evidence="5">
    <location>
        <begin position="234"/>
        <end position="237"/>
    </location>
</feature>
<feature type="strand" evidence="5">
    <location>
        <begin position="241"/>
        <end position="244"/>
    </location>
</feature>
<feature type="strand" evidence="5">
    <location>
        <begin position="248"/>
        <end position="251"/>
    </location>
</feature>
<feature type="helix" evidence="5">
    <location>
        <begin position="253"/>
        <end position="255"/>
    </location>
</feature>
<feature type="turn" evidence="5">
    <location>
        <begin position="258"/>
        <end position="262"/>
    </location>
</feature>
<feature type="turn" evidence="5">
    <location>
        <begin position="267"/>
        <end position="269"/>
    </location>
</feature>
<feature type="helix" evidence="5">
    <location>
        <begin position="276"/>
        <end position="280"/>
    </location>
</feature>
<feature type="helix" evidence="5">
    <location>
        <begin position="282"/>
        <end position="290"/>
    </location>
</feature>
<feature type="helix" evidence="5">
    <location>
        <begin position="296"/>
        <end position="302"/>
    </location>
</feature>
<feature type="helix" evidence="5">
    <location>
        <begin position="304"/>
        <end position="310"/>
    </location>
</feature>
<feature type="helix" evidence="5">
    <location>
        <begin position="315"/>
        <end position="317"/>
    </location>
</feature>
<feature type="helix" evidence="5">
    <location>
        <begin position="321"/>
        <end position="340"/>
    </location>
</feature>
<gene>
    <name type="primary">pomk</name>
    <name type="synonym">sgk196</name>
    <name type="ORF">zgc:101572</name>
</gene>
<accession>Q5U3W1</accession>
<dbReference type="EC" id="2.7.1.183"/>
<dbReference type="EMBL" id="BC085371">
    <property type="protein sequence ID" value="AAH85371.1"/>
    <property type="molecule type" value="mRNA"/>
</dbReference>
<dbReference type="RefSeq" id="NP_001007415.1">
    <property type="nucleotide sequence ID" value="NM_001007414.1"/>
</dbReference>
<dbReference type="PDB" id="5GZA">
    <property type="method" value="X-ray"/>
    <property type="resolution" value="2.00 A"/>
    <property type="chains" value="A=53-342"/>
</dbReference>
<dbReference type="PDBsum" id="5GZA"/>
<dbReference type="SMR" id="Q5U3W1"/>
<dbReference type="FunCoup" id="Q5U3W1">
    <property type="interactions" value="865"/>
</dbReference>
<dbReference type="STRING" id="7955.ENSDARP00000109435"/>
<dbReference type="PaxDb" id="7955-ENSDARP00000109435"/>
<dbReference type="Ensembl" id="ENSDART00000122695">
    <property type="protein sequence ID" value="ENSDARP00000109435"/>
    <property type="gene ID" value="ENSDARG00000003208"/>
</dbReference>
<dbReference type="Ensembl" id="ENSDART00000183846">
    <property type="protein sequence ID" value="ENSDARP00000157180"/>
    <property type="gene ID" value="ENSDARG00000112152"/>
</dbReference>
<dbReference type="GeneID" id="492773"/>
<dbReference type="KEGG" id="dre:492773"/>
<dbReference type="AGR" id="ZFIN:ZDB-GENE-041114-119"/>
<dbReference type="CTD" id="84197"/>
<dbReference type="ZFIN" id="ZDB-GENE-041114-119">
    <property type="gene designation" value="pomk"/>
</dbReference>
<dbReference type="eggNOG" id="ENOG502QQQV">
    <property type="taxonomic scope" value="Eukaryota"/>
</dbReference>
<dbReference type="HOGENOM" id="CLU_067581_0_0_1"/>
<dbReference type="InParanoid" id="Q5U3W1"/>
<dbReference type="OMA" id="NTWHRRL"/>
<dbReference type="OrthoDB" id="4062651at2759"/>
<dbReference type="PhylomeDB" id="Q5U3W1"/>
<dbReference type="TreeFam" id="TF328472"/>
<dbReference type="BRENDA" id="2.7.1.183">
    <property type="organism ID" value="928"/>
</dbReference>
<dbReference type="Reactome" id="R-DRE-5173105">
    <property type="pathway name" value="O-linked glycosylation"/>
</dbReference>
<dbReference type="PRO" id="PR:Q5U3W1"/>
<dbReference type="Proteomes" id="UP000000437">
    <property type="component" value="Alternate scaffold 13"/>
</dbReference>
<dbReference type="Proteomes" id="UP000000437">
    <property type="component" value="Chromosome 13"/>
</dbReference>
<dbReference type="Bgee" id="ENSDARG00000003208">
    <property type="expression patterns" value="Expressed in retina and 23 other cell types or tissues"/>
</dbReference>
<dbReference type="GO" id="GO:0005789">
    <property type="term" value="C:endoplasmic reticulum membrane"/>
    <property type="evidence" value="ECO:0000318"/>
    <property type="project" value="GO_Central"/>
</dbReference>
<dbReference type="GO" id="GO:0043531">
    <property type="term" value="F:ADP binding"/>
    <property type="evidence" value="ECO:0000314"/>
    <property type="project" value="ZFIN"/>
</dbReference>
<dbReference type="GO" id="GO:0005524">
    <property type="term" value="F:ATP binding"/>
    <property type="evidence" value="ECO:0007669"/>
    <property type="project" value="UniProtKB-KW"/>
</dbReference>
<dbReference type="GO" id="GO:0019200">
    <property type="term" value="F:carbohydrate kinase activity"/>
    <property type="evidence" value="ECO:0000318"/>
    <property type="project" value="GO_Central"/>
</dbReference>
<dbReference type="GO" id="GO:0016301">
    <property type="term" value="F:kinase activity"/>
    <property type="evidence" value="ECO:0000314"/>
    <property type="project" value="ZFIN"/>
</dbReference>
<dbReference type="GO" id="GO:0016773">
    <property type="term" value="F:phosphotransferase activity, alcohol group as acceptor"/>
    <property type="evidence" value="ECO:0000250"/>
    <property type="project" value="UniProtKB"/>
</dbReference>
<dbReference type="GO" id="GO:0030247">
    <property type="term" value="F:polysaccharide binding"/>
    <property type="evidence" value="ECO:0000314"/>
    <property type="project" value="ZFIN"/>
</dbReference>
<dbReference type="GO" id="GO:0004672">
    <property type="term" value="F:protein kinase activity"/>
    <property type="evidence" value="ECO:0007669"/>
    <property type="project" value="InterPro"/>
</dbReference>
<dbReference type="GO" id="GO:0046835">
    <property type="term" value="P:carbohydrate phosphorylation"/>
    <property type="evidence" value="ECO:0000250"/>
    <property type="project" value="UniProtKB"/>
</dbReference>
<dbReference type="GO" id="GO:0061061">
    <property type="term" value="P:muscle structure development"/>
    <property type="evidence" value="ECO:0000315"/>
    <property type="project" value="ZFIN"/>
</dbReference>
<dbReference type="GO" id="GO:0006493">
    <property type="term" value="P:protein O-linked glycosylation"/>
    <property type="evidence" value="ECO:0000250"/>
    <property type="project" value="UniProtKB"/>
</dbReference>
<dbReference type="GO" id="GO:0036268">
    <property type="term" value="P:swimming"/>
    <property type="evidence" value="ECO:0000315"/>
    <property type="project" value="ZFIN"/>
</dbReference>
<dbReference type="FunFam" id="1.10.510.10:FF:000464">
    <property type="entry name" value="Protein O-mannose kinase"/>
    <property type="match status" value="1"/>
</dbReference>
<dbReference type="Gene3D" id="1.10.510.10">
    <property type="entry name" value="Transferase(Phosphotransferase) domain 1"/>
    <property type="match status" value="1"/>
</dbReference>
<dbReference type="InterPro" id="IPR011009">
    <property type="entry name" value="Kinase-like_dom_sf"/>
</dbReference>
<dbReference type="InterPro" id="IPR039318">
    <property type="entry name" value="POMK"/>
</dbReference>
<dbReference type="InterPro" id="IPR000719">
    <property type="entry name" value="Prot_kinase_dom"/>
</dbReference>
<dbReference type="InterPro" id="IPR001245">
    <property type="entry name" value="Ser-Thr/Tyr_kinase_cat_dom"/>
</dbReference>
<dbReference type="PANTHER" id="PTHR22618">
    <property type="entry name" value="PROTEIN O-MANNOSE KINASE"/>
    <property type="match status" value="1"/>
</dbReference>
<dbReference type="PANTHER" id="PTHR22618:SF2">
    <property type="entry name" value="PROTEIN O-MANNOSE KINASE"/>
    <property type="match status" value="1"/>
</dbReference>
<dbReference type="Pfam" id="PF07714">
    <property type="entry name" value="PK_Tyr_Ser-Thr"/>
    <property type="match status" value="1"/>
</dbReference>
<dbReference type="SUPFAM" id="SSF56112">
    <property type="entry name" value="Protein kinase-like (PK-like)"/>
    <property type="match status" value="1"/>
</dbReference>
<dbReference type="PROSITE" id="PS50011">
    <property type="entry name" value="PROTEIN_KINASE_DOM"/>
    <property type="match status" value="1"/>
</dbReference>